<name>LDH1_LACJO</name>
<keyword id="KW-0963">Cytoplasm</keyword>
<keyword id="KW-0520">NAD</keyword>
<keyword id="KW-0560">Oxidoreductase</keyword>
<keyword id="KW-0597">Phosphoprotein</keyword>
<comment type="function">
    <text evidence="1">Catalyzes the conversion of lactate to pyruvate.</text>
</comment>
<comment type="catalytic activity">
    <reaction evidence="1">
        <text>(S)-lactate + NAD(+) = pyruvate + NADH + H(+)</text>
        <dbReference type="Rhea" id="RHEA:23444"/>
        <dbReference type="ChEBI" id="CHEBI:15361"/>
        <dbReference type="ChEBI" id="CHEBI:15378"/>
        <dbReference type="ChEBI" id="CHEBI:16651"/>
        <dbReference type="ChEBI" id="CHEBI:57540"/>
        <dbReference type="ChEBI" id="CHEBI:57945"/>
        <dbReference type="EC" id="1.1.1.27"/>
    </reaction>
</comment>
<comment type="pathway">
    <text evidence="1">Fermentation; pyruvate fermentation to lactate; (S)-lactate from pyruvate: step 1/1.</text>
</comment>
<comment type="subunit">
    <text evidence="1">Homotetramer.</text>
</comment>
<comment type="subcellular location">
    <subcellularLocation>
        <location evidence="1">Cytoplasm</location>
    </subcellularLocation>
</comment>
<comment type="similarity">
    <text evidence="1">Belongs to the LDH/MDH superfamily. LDH family.</text>
</comment>
<reference key="1">
    <citation type="journal article" date="2004" name="Proc. Natl. Acad. Sci. U.S.A.">
        <title>The genome sequence of the probiotic intestinal bacterium Lactobacillus johnsonii NCC 533.</title>
        <authorList>
            <person name="Pridmore R.D."/>
            <person name="Berger B."/>
            <person name="Desiere F."/>
            <person name="Vilanova D."/>
            <person name="Barretto C."/>
            <person name="Pittet A.-C."/>
            <person name="Zwahlen M.-C."/>
            <person name="Rouvet M."/>
            <person name="Altermann E."/>
            <person name="Barrangou R."/>
            <person name="Mollet B."/>
            <person name="Mercenier A."/>
            <person name="Klaenhammer T."/>
            <person name="Arigoni F."/>
            <person name="Schell M.A."/>
        </authorList>
    </citation>
    <scope>NUCLEOTIDE SEQUENCE [LARGE SCALE GENOMIC DNA]</scope>
    <source>
        <strain>CNCM I-1225 / La1 / NCC 533</strain>
    </source>
</reference>
<proteinExistence type="inferred from homology"/>
<sequence>MSEEKIHKIILVGDGAVGSTYAFSLVQQGIAQELGIVDIVKERTQGDAIDLADATPWIAPKTIYSAEYSDAKDADLVVISAGAPQKPGETRLDLVNKNLKILSSIVEPIVESGFNGIFLVAANPVDILTHATWRMSGFPKDRVIGSGTSLDTGRLQKVIGEMEHVDPRSVNAYMLGEHGDTEFPVWSYNNVGGVKVSDWVKAHPEVGENKLEAIHKEVADMAYDIINKKGATFYGIGTALAFITKAILNNEHRVLPLSVPMDGEYGLHDIHIGTPAVVGRHGLEQVIEMPLNADEQAKMEASAKQLKEVMDKAFKETGVKVRQ</sequence>
<organism>
    <name type="scientific">Lactobacillus johnsonii (strain CNCM I-12250 / La1 / NCC 533)</name>
    <dbReference type="NCBI Taxonomy" id="257314"/>
    <lineage>
        <taxon>Bacteria</taxon>
        <taxon>Bacillati</taxon>
        <taxon>Bacillota</taxon>
        <taxon>Bacilli</taxon>
        <taxon>Lactobacillales</taxon>
        <taxon>Lactobacillaceae</taxon>
        <taxon>Lactobacillus</taxon>
    </lineage>
</organism>
<accession>P62052</accession>
<dbReference type="EC" id="1.1.1.27" evidence="1"/>
<dbReference type="EMBL" id="AE017198">
    <property type="protein sequence ID" value="AAS08257.1"/>
    <property type="molecule type" value="Genomic_DNA"/>
</dbReference>
<dbReference type="RefSeq" id="WP_004898900.1">
    <property type="nucleotide sequence ID" value="NC_005362.1"/>
</dbReference>
<dbReference type="SMR" id="P62052"/>
<dbReference type="KEGG" id="ljo:LJ_0274"/>
<dbReference type="eggNOG" id="COG0039">
    <property type="taxonomic scope" value="Bacteria"/>
</dbReference>
<dbReference type="HOGENOM" id="CLU_045401_1_1_9"/>
<dbReference type="UniPathway" id="UPA00554">
    <property type="reaction ID" value="UER00611"/>
</dbReference>
<dbReference type="Proteomes" id="UP000000581">
    <property type="component" value="Chromosome"/>
</dbReference>
<dbReference type="GO" id="GO:0005737">
    <property type="term" value="C:cytoplasm"/>
    <property type="evidence" value="ECO:0007669"/>
    <property type="project" value="UniProtKB-SubCell"/>
</dbReference>
<dbReference type="GO" id="GO:0004459">
    <property type="term" value="F:L-lactate dehydrogenase activity"/>
    <property type="evidence" value="ECO:0007669"/>
    <property type="project" value="UniProtKB-UniRule"/>
</dbReference>
<dbReference type="GO" id="GO:0006096">
    <property type="term" value="P:glycolytic process"/>
    <property type="evidence" value="ECO:0007669"/>
    <property type="project" value="UniProtKB-UniRule"/>
</dbReference>
<dbReference type="GO" id="GO:0006089">
    <property type="term" value="P:lactate metabolic process"/>
    <property type="evidence" value="ECO:0007669"/>
    <property type="project" value="TreeGrafter"/>
</dbReference>
<dbReference type="CDD" id="cd05291">
    <property type="entry name" value="HicDH_like"/>
    <property type="match status" value="1"/>
</dbReference>
<dbReference type="FunFam" id="3.40.50.720:FF:000018">
    <property type="entry name" value="Malate dehydrogenase"/>
    <property type="match status" value="1"/>
</dbReference>
<dbReference type="Gene3D" id="3.90.110.10">
    <property type="entry name" value="Lactate dehydrogenase/glycoside hydrolase, family 4, C-terminal"/>
    <property type="match status" value="1"/>
</dbReference>
<dbReference type="Gene3D" id="3.40.50.720">
    <property type="entry name" value="NAD(P)-binding Rossmann-like Domain"/>
    <property type="match status" value="1"/>
</dbReference>
<dbReference type="HAMAP" id="MF_00488">
    <property type="entry name" value="Lactate_dehydrog"/>
    <property type="match status" value="1"/>
</dbReference>
<dbReference type="InterPro" id="IPR001557">
    <property type="entry name" value="L-lactate/malate_DH"/>
</dbReference>
<dbReference type="InterPro" id="IPR011304">
    <property type="entry name" value="L-lactate_DH"/>
</dbReference>
<dbReference type="InterPro" id="IPR018177">
    <property type="entry name" value="L-lactate_DH_AS"/>
</dbReference>
<dbReference type="InterPro" id="IPR022383">
    <property type="entry name" value="Lactate/malate_DH_C"/>
</dbReference>
<dbReference type="InterPro" id="IPR001236">
    <property type="entry name" value="Lactate/malate_DH_N"/>
</dbReference>
<dbReference type="InterPro" id="IPR015955">
    <property type="entry name" value="Lactate_DH/Glyco_Ohase_4_C"/>
</dbReference>
<dbReference type="InterPro" id="IPR036291">
    <property type="entry name" value="NAD(P)-bd_dom_sf"/>
</dbReference>
<dbReference type="NCBIfam" id="TIGR01771">
    <property type="entry name" value="L-LDH-NAD"/>
    <property type="match status" value="1"/>
</dbReference>
<dbReference type="NCBIfam" id="NF000824">
    <property type="entry name" value="PRK00066.1"/>
    <property type="match status" value="1"/>
</dbReference>
<dbReference type="PANTHER" id="PTHR43128">
    <property type="entry name" value="L-2-HYDROXYCARBOXYLATE DEHYDROGENASE (NAD(P)(+))"/>
    <property type="match status" value="1"/>
</dbReference>
<dbReference type="PANTHER" id="PTHR43128:SF16">
    <property type="entry name" value="L-LACTATE DEHYDROGENASE"/>
    <property type="match status" value="1"/>
</dbReference>
<dbReference type="Pfam" id="PF02866">
    <property type="entry name" value="Ldh_1_C"/>
    <property type="match status" value="1"/>
</dbReference>
<dbReference type="Pfam" id="PF00056">
    <property type="entry name" value="Ldh_1_N"/>
    <property type="match status" value="1"/>
</dbReference>
<dbReference type="PIRSF" id="PIRSF000102">
    <property type="entry name" value="Lac_mal_DH"/>
    <property type="match status" value="1"/>
</dbReference>
<dbReference type="PRINTS" id="PR00086">
    <property type="entry name" value="LLDHDRGNASE"/>
</dbReference>
<dbReference type="SUPFAM" id="SSF56327">
    <property type="entry name" value="LDH C-terminal domain-like"/>
    <property type="match status" value="1"/>
</dbReference>
<dbReference type="SUPFAM" id="SSF51735">
    <property type="entry name" value="NAD(P)-binding Rossmann-fold domains"/>
    <property type="match status" value="1"/>
</dbReference>
<dbReference type="PROSITE" id="PS00064">
    <property type="entry name" value="L_LDH"/>
    <property type="match status" value="1"/>
</dbReference>
<gene>
    <name evidence="1" type="primary">ldh1</name>
    <name type="ordered locus">LJ_0274</name>
</gene>
<evidence type="ECO:0000255" key="1">
    <source>
        <dbReference type="HAMAP-Rule" id="MF_00488"/>
    </source>
</evidence>
<feature type="chain" id="PRO_0000168349" description="L-lactate dehydrogenase 1">
    <location>
        <begin position="1"/>
        <end position="323"/>
    </location>
</feature>
<feature type="active site" description="Proton acceptor" evidence="1">
    <location>
        <position position="178"/>
    </location>
</feature>
<feature type="binding site" evidence="1">
    <location>
        <position position="17"/>
    </location>
    <ligand>
        <name>NAD(+)</name>
        <dbReference type="ChEBI" id="CHEBI:57540"/>
    </ligand>
</feature>
<feature type="binding site" evidence="1">
    <location>
        <position position="38"/>
    </location>
    <ligand>
        <name>NAD(+)</name>
        <dbReference type="ChEBI" id="CHEBI:57540"/>
    </ligand>
</feature>
<feature type="binding site" evidence="1">
    <location>
        <position position="43"/>
    </location>
    <ligand>
        <name>NAD(+)</name>
        <dbReference type="ChEBI" id="CHEBI:57540"/>
    </ligand>
</feature>
<feature type="binding site" evidence="1">
    <location>
        <position position="68"/>
    </location>
    <ligand>
        <name>NAD(+)</name>
        <dbReference type="ChEBI" id="CHEBI:57540"/>
    </ligand>
</feature>
<feature type="binding site" evidence="1">
    <location>
        <begin position="82"/>
        <end position="83"/>
    </location>
    <ligand>
        <name>NAD(+)</name>
        <dbReference type="ChEBI" id="CHEBI:57540"/>
    </ligand>
</feature>
<feature type="binding site" evidence="1">
    <location>
        <position position="85"/>
    </location>
    <ligand>
        <name>substrate</name>
    </ligand>
</feature>
<feature type="binding site" evidence="1">
    <location>
        <position position="91"/>
    </location>
    <ligand>
        <name>substrate</name>
    </ligand>
</feature>
<feature type="binding site" evidence="1">
    <location>
        <position position="104"/>
    </location>
    <ligand>
        <name>NAD(+)</name>
        <dbReference type="ChEBI" id="CHEBI:57540"/>
    </ligand>
</feature>
<feature type="binding site" evidence="1">
    <location>
        <begin position="121"/>
        <end position="123"/>
    </location>
    <ligand>
        <name>NAD(+)</name>
        <dbReference type="ChEBI" id="CHEBI:57540"/>
    </ligand>
</feature>
<feature type="binding site" evidence="1">
    <location>
        <begin position="123"/>
        <end position="126"/>
    </location>
    <ligand>
        <name>substrate</name>
    </ligand>
</feature>
<feature type="binding site" evidence="1">
    <location>
        <position position="146"/>
    </location>
    <ligand>
        <name>NAD(+)</name>
        <dbReference type="ChEBI" id="CHEBI:57540"/>
    </ligand>
</feature>
<feature type="binding site" evidence="1">
    <location>
        <begin position="151"/>
        <end position="154"/>
    </location>
    <ligand>
        <name>substrate</name>
    </ligand>
</feature>
<feature type="binding site" evidence="1">
    <location>
        <position position="232"/>
    </location>
    <ligand>
        <name>substrate</name>
    </ligand>
</feature>
<feature type="modified residue" description="Phosphotyrosine" evidence="1">
    <location>
        <position position="223"/>
    </location>
</feature>
<protein>
    <recommendedName>
        <fullName evidence="1">L-lactate dehydrogenase 1</fullName>
        <shortName evidence="1">L-LDH 1</shortName>
        <ecNumber evidence="1">1.1.1.27</ecNumber>
    </recommendedName>
</protein>